<evidence type="ECO:0000250" key="1">
    <source>
        <dbReference type="UniProtKB" id="Q9H6Q4"/>
    </source>
</evidence>
<evidence type="ECO:0000255" key="2"/>
<evidence type="ECO:0000269" key="3">
    <source>
    </source>
</evidence>
<evidence type="ECO:0000269" key="4">
    <source>
    </source>
</evidence>
<evidence type="ECO:0000269" key="5">
    <source>
    </source>
</evidence>
<evidence type="ECO:0000269" key="6">
    <source>
    </source>
</evidence>
<evidence type="ECO:0000303" key="7">
    <source>
    </source>
</evidence>
<evidence type="ECO:0000303" key="8">
    <source>
    </source>
</evidence>
<evidence type="ECO:0000305" key="9"/>
<evidence type="ECO:0000312" key="10">
    <source>
        <dbReference type="Araport" id="AT4G16440"/>
    </source>
</evidence>
<evidence type="ECO:0000312" key="11">
    <source>
        <dbReference type="EMBL" id="CAB10420.1"/>
    </source>
</evidence>
<evidence type="ECO:0000312" key="12">
    <source>
        <dbReference type="EMBL" id="CAB78686.1"/>
    </source>
</evidence>
<evidence type="ECO:0000312" key="13">
    <source>
        <dbReference type="EMBL" id="CAC44620.1"/>
    </source>
</evidence>
<keyword id="KW-0004">4Fe-4S</keyword>
<keyword id="KW-0963">Cytoplasm</keyword>
<keyword id="KW-0408">Iron</keyword>
<keyword id="KW-0411">Iron-sulfur</keyword>
<keyword id="KW-0479">Metal-binding</keyword>
<keyword id="KW-0539">Nucleus</keyword>
<keyword id="KW-1185">Reference proteome</keyword>
<gene>
    <name evidence="8" type="primary">NAR1</name>
    <name evidence="7" type="synonym">GOLLUM</name>
    <name evidence="10" type="ordered locus">At4g16440</name>
    <name evidence="11" type="ORF">dl4245c</name>
    <name evidence="12" type="ORF">FCAALL.367</name>
</gene>
<proteinExistence type="evidence at protein level"/>
<reference key="1">
    <citation type="submission" date="2001-07" db="EMBL/GenBank/DDBJ databases">
        <title>T-DNA tagging of the Narf like gene in M. truncatula.</title>
        <authorList>
            <person name="Mondy S."/>
        </authorList>
    </citation>
    <scope>NUCLEOTIDE SEQUENCE [GENOMIC DNA]</scope>
</reference>
<reference key="2">
    <citation type="submission" date="2001-07" db="EMBL/GenBank/DDBJ databases">
        <authorList>
            <person name="Ratet P."/>
        </authorList>
    </citation>
    <scope>NUCLEOTIDE SEQUENCE [GENOMIC DNA]</scope>
</reference>
<reference key="3">
    <citation type="journal article" date="1998" name="Nature">
        <title>Analysis of 1.9 Mb of contiguous sequence from chromosome 4 of Arabidopsis thaliana.</title>
        <authorList>
            <person name="Bevan M."/>
            <person name="Bancroft I."/>
            <person name="Bent E."/>
            <person name="Love K."/>
            <person name="Goodman H.M."/>
            <person name="Dean C."/>
            <person name="Bergkamp R."/>
            <person name="Dirkse W."/>
            <person name="van Staveren M."/>
            <person name="Stiekema W."/>
            <person name="Drost L."/>
            <person name="Ridley P."/>
            <person name="Hudson S.-A."/>
            <person name="Patel K."/>
            <person name="Murphy G."/>
            <person name="Piffanelli P."/>
            <person name="Wedler H."/>
            <person name="Wedler E."/>
            <person name="Wambutt R."/>
            <person name="Weitzenegger T."/>
            <person name="Pohl T."/>
            <person name="Terryn N."/>
            <person name="Gielen J."/>
            <person name="Villarroel R."/>
            <person name="De Clercq R."/>
            <person name="van Montagu M."/>
            <person name="Lecharny A."/>
            <person name="Aubourg S."/>
            <person name="Gy I."/>
            <person name="Kreis M."/>
            <person name="Lao N."/>
            <person name="Kavanagh T."/>
            <person name="Hempel S."/>
            <person name="Kotter P."/>
            <person name="Entian K.-D."/>
            <person name="Rieger M."/>
            <person name="Schaefer M."/>
            <person name="Funk B."/>
            <person name="Mueller-Auer S."/>
            <person name="Silvey M."/>
            <person name="James R."/>
            <person name="Monfort A."/>
            <person name="Pons A."/>
            <person name="Puigdomenech P."/>
            <person name="Douka A."/>
            <person name="Voukelatou E."/>
            <person name="Milioni D."/>
            <person name="Hatzopoulos P."/>
            <person name="Piravandi E."/>
            <person name="Obermaier B."/>
            <person name="Hilbert H."/>
            <person name="Duesterhoeft A."/>
            <person name="Moores T."/>
            <person name="Jones J.D.G."/>
            <person name="Eneva T."/>
            <person name="Palme K."/>
            <person name="Benes V."/>
            <person name="Rechmann S."/>
            <person name="Ansorge W."/>
            <person name="Cooke R."/>
            <person name="Berger C."/>
            <person name="Delseny M."/>
            <person name="Voet M."/>
            <person name="Volckaert G."/>
            <person name="Mewes H.-W."/>
            <person name="Klosterman S."/>
            <person name="Schueller C."/>
            <person name="Chalwatzis N."/>
        </authorList>
    </citation>
    <scope>NUCLEOTIDE SEQUENCE [LARGE SCALE GENOMIC DNA]</scope>
    <source>
        <strain>cv. Columbia</strain>
    </source>
</reference>
<reference key="4">
    <citation type="journal article" date="1999" name="Nature">
        <title>Sequence and analysis of chromosome 4 of the plant Arabidopsis thaliana.</title>
        <authorList>
            <person name="Mayer K.F.X."/>
            <person name="Schueller C."/>
            <person name="Wambutt R."/>
            <person name="Murphy G."/>
            <person name="Volckaert G."/>
            <person name="Pohl T."/>
            <person name="Duesterhoeft A."/>
            <person name="Stiekema W."/>
            <person name="Entian K.-D."/>
            <person name="Terryn N."/>
            <person name="Harris B."/>
            <person name="Ansorge W."/>
            <person name="Brandt P."/>
            <person name="Grivell L.A."/>
            <person name="Rieger M."/>
            <person name="Weichselgartner M."/>
            <person name="de Simone V."/>
            <person name="Obermaier B."/>
            <person name="Mache R."/>
            <person name="Mueller M."/>
            <person name="Kreis M."/>
            <person name="Delseny M."/>
            <person name="Puigdomenech P."/>
            <person name="Watson M."/>
            <person name="Schmidtheini T."/>
            <person name="Reichert B."/>
            <person name="Portetelle D."/>
            <person name="Perez-Alonso M."/>
            <person name="Boutry M."/>
            <person name="Bancroft I."/>
            <person name="Vos P."/>
            <person name="Hoheisel J."/>
            <person name="Zimmermann W."/>
            <person name="Wedler H."/>
            <person name="Ridley P."/>
            <person name="Langham S.-A."/>
            <person name="McCullagh B."/>
            <person name="Bilham L."/>
            <person name="Robben J."/>
            <person name="van der Schueren J."/>
            <person name="Grymonprez B."/>
            <person name="Chuang Y.-J."/>
            <person name="Vandenbussche F."/>
            <person name="Braeken M."/>
            <person name="Weltjens I."/>
            <person name="Voet M."/>
            <person name="Bastiaens I."/>
            <person name="Aert R."/>
            <person name="Defoor E."/>
            <person name="Weitzenegger T."/>
            <person name="Bothe G."/>
            <person name="Ramsperger U."/>
            <person name="Hilbert H."/>
            <person name="Braun M."/>
            <person name="Holzer E."/>
            <person name="Brandt A."/>
            <person name="Peters S."/>
            <person name="van Staveren M."/>
            <person name="Dirkse W."/>
            <person name="Mooijman P."/>
            <person name="Klein Lankhorst R."/>
            <person name="Rose M."/>
            <person name="Hauf J."/>
            <person name="Koetter P."/>
            <person name="Berneiser S."/>
            <person name="Hempel S."/>
            <person name="Feldpausch M."/>
            <person name="Lamberth S."/>
            <person name="Van den Daele H."/>
            <person name="De Keyser A."/>
            <person name="Buysshaert C."/>
            <person name="Gielen J."/>
            <person name="Villarroel R."/>
            <person name="De Clercq R."/>
            <person name="van Montagu M."/>
            <person name="Rogers J."/>
            <person name="Cronin A."/>
            <person name="Quail M.A."/>
            <person name="Bray-Allen S."/>
            <person name="Clark L."/>
            <person name="Doggett J."/>
            <person name="Hall S."/>
            <person name="Kay M."/>
            <person name="Lennard N."/>
            <person name="McLay K."/>
            <person name="Mayes R."/>
            <person name="Pettett A."/>
            <person name="Rajandream M.A."/>
            <person name="Lyne M."/>
            <person name="Benes V."/>
            <person name="Rechmann S."/>
            <person name="Borkova D."/>
            <person name="Bloecker H."/>
            <person name="Scharfe M."/>
            <person name="Grimm M."/>
            <person name="Loehnert T.-H."/>
            <person name="Dose S."/>
            <person name="de Haan M."/>
            <person name="Maarse A.C."/>
            <person name="Schaefer M."/>
            <person name="Mueller-Auer S."/>
            <person name="Gabel C."/>
            <person name="Fuchs M."/>
            <person name="Fartmann B."/>
            <person name="Granderath K."/>
            <person name="Dauner D."/>
            <person name="Herzl A."/>
            <person name="Neumann S."/>
            <person name="Argiriou A."/>
            <person name="Vitale D."/>
            <person name="Liguori R."/>
            <person name="Piravandi E."/>
            <person name="Massenet O."/>
            <person name="Quigley F."/>
            <person name="Clabauld G."/>
            <person name="Muendlein A."/>
            <person name="Felber R."/>
            <person name="Schnabl S."/>
            <person name="Hiller R."/>
            <person name="Schmidt W."/>
            <person name="Lecharny A."/>
            <person name="Aubourg S."/>
            <person name="Chefdor F."/>
            <person name="Cooke R."/>
            <person name="Berger C."/>
            <person name="Monfort A."/>
            <person name="Casacuberta E."/>
            <person name="Gibbons T."/>
            <person name="Weber N."/>
            <person name="Vandenbol M."/>
            <person name="Bargues M."/>
            <person name="Terol J."/>
            <person name="Torres A."/>
            <person name="Perez-Perez A."/>
            <person name="Purnelle B."/>
            <person name="Bent E."/>
            <person name="Johnson S."/>
            <person name="Tacon D."/>
            <person name="Jesse T."/>
            <person name="Heijnen L."/>
            <person name="Schwarz S."/>
            <person name="Scholler P."/>
            <person name="Heber S."/>
            <person name="Francs P."/>
            <person name="Bielke C."/>
            <person name="Frishman D."/>
            <person name="Haase D."/>
            <person name="Lemcke K."/>
            <person name="Mewes H.-W."/>
            <person name="Stocker S."/>
            <person name="Zaccaria P."/>
            <person name="Bevan M."/>
            <person name="Wilson R.K."/>
            <person name="de la Bastide M."/>
            <person name="Habermann K."/>
            <person name="Parnell L."/>
            <person name="Dedhia N."/>
            <person name="Gnoj L."/>
            <person name="Schutz K."/>
            <person name="Huang E."/>
            <person name="Spiegel L."/>
            <person name="Sekhon M."/>
            <person name="Murray J."/>
            <person name="Sheet P."/>
            <person name="Cordes M."/>
            <person name="Abu-Threideh J."/>
            <person name="Stoneking T."/>
            <person name="Kalicki J."/>
            <person name="Graves T."/>
            <person name="Harmon G."/>
            <person name="Edwards J."/>
            <person name="Latreille P."/>
            <person name="Courtney L."/>
            <person name="Cloud J."/>
            <person name="Abbott A."/>
            <person name="Scott K."/>
            <person name="Johnson D."/>
            <person name="Minx P."/>
            <person name="Bentley D."/>
            <person name="Fulton B."/>
            <person name="Miller N."/>
            <person name="Greco T."/>
            <person name="Kemp K."/>
            <person name="Kramer J."/>
            <person name="Fulton L."/>
            <person name="Mardis E."/>
            <person name="Dante M."/>
            <person name="Pepin K."/>
            <person name="Hillier L.W."/>
            <person name="Nelson J."/>
            <person name="Spieth J."/>
            <person name="Ryan E."/>
            <person name="Andrews S."/>
            <person name="Geisel C."/>
            <person name="Layman D."/>
            <person name="Du H."/>
            <person name="Ali J."/>
            <person name="Berghoff A."/>
            <person name="Jones K."/>
            <person name="Drone K."/>
            <person name="Cotton M."/>
            <person name="Joshu C."/>
            <person name="Antonoiu B."/>
            <person name="Zidanic M."/>
            <person name="Strong C."/>
            <person name="Sun H."/>
            <person name="Lamar B."/>
            <person name="Yordan C."/>
            <person name="Ma P."/>
            <person name="Zhong J."/>
            <person name="Preston R."/>
            <person name="Vil D."/>
            <person name="Shekher M."/>
            <person name="Matero A."/>
            <person name="Shah R."/>
            <person name="Swaby I.K."/>
            <person name="O'Shaughnessy A."/>
            <person name="Rodriguez M."/>
            <person name="Hoffman J."/>
            <person name="Till S."/>
            <person name="Granat S."/>
            <person name="Shohdy N."/>
            <person name="Hasegawa A."/>
            <person name="Hameed A."/>
            <person name="Lodhi M."/>
            <person name="Johnson A."/>
            <person name="Chen E."/>
            <person name="Marra M.A."/>
            <person name="Martienssen R."/>
            <person name="McCombie W.R."/>
        </authorList>
    </citation>
    <scope>NUCLEOTIDE SEQUENCE [LARGE SCALE GENOMIC DNA]</scope>
    <source>
        <strain>cv. Columbia</strain>
    </source>
</reference>
<reference key="5">
    <citation type="journal article" date="2017" name="Plant J.">
        <title>Araport11: a complete reannotation of the Arabidopsis thaliana reference genome.</title>
        <authorList>
            <person name="Cheng C.Y."/>
            <person name="Krishnakumar V."/>
            <person name="Chan A.P."/>
            <person name="Thibaud-Nissen F."/>
            <person name="Schobel S."/>
            <person name="Town C.D."/>
        </authorList>
    </citation>
    <scope>GENOME REANNOTATION</scope>
    <source>
        <strain>cv. Columbia</strain>
    </source>
</reference>
<reference key="6">
    <citation type="journal article" date="2002" name="Science">
        <title>Functional annotation of a full-length Arabidopsis cDNA collection.</title>
        <authorList>
            <person name="Seki M."/>
            <person name="Narusaka M."/>
            <person name="Kamiya A."/>
            <person name="Ishida J."/>
            <person name="Satou M."/>
            <person name="Sakurai T."/>
            <person name="Nakajima M."/>
            <person name="Enju A."/>
            <person name="Akiyama K."/>
            <person name="Oono Y."/>
            <person name="Muramatsu M."/>
            <person name="Hayashizaki Y."/>
            <person name="Kawai J."/>
            <person name="Carninci P."/>
            <person name="Itoh M."/>
            <person name="Ishii Y."/>
            <person name="Arakawa T."/>
            <person name="Shibata K."/>
            <person name="Shinagawa A."/>
            <person name="Shinozaki K."/>
        </authorList>
    </citation>
    <scope>NUCLEOTIDE SEQUENCE [LARGE SCALE MRNA] OF 256-474</scope>
    <source>
        <strain>cv. Columbia</strain>
    </source>
</reference>
<reference key="7">
    <citation type="journal article" date="2003" name="Science">
        <title>Empirical analysis of transcriptional activity in the Arabidopsis genome.</title>
        <authorList>
            <person name="Yamada K."/>
            <person name="Lim J."/>
            <person name="Dale J.M."/>
            <person name="Chen H."/>
            <person name="Shinn P."/>
            <person name="Palm C.J."/>
            <person name="Southwick A.M."/>
            <person name="Wu H.C."/>
            <person name="Kim C.J."/>
            <person name="Nguyen M."/>
            <person name="Pham P.K."/>
            <person name="Cheuk R.F."/>
            <person name="Karlin-Newmann G."/>
            <person name="Liu S.X."/>
            <person name="Lam B."/>
            <person name="Sakano H."/>
            <person name="Wu T."/>
            <person name="Yu G."/>
            <person name="Miranda M."/>
            <person name="Quach H.L."/>
            <person name="Tripp M."/>
            <person name="Chang C.H."/>
            <person name="Lee J.M."/>
            <person name="Toriumi M.J."/>
            <person name="Chan M.M."/>
            <person name="Tang C.C."/>
            <person name="Onodera C.S."/>
            <person name="Deng J.M."/>
            <person name="Akiyama K."/>
            <person name="Ansari Y."/>
            <person name="Arakawa T."/>
            <person name="Banh J."/>
            <person name="Banno F."/>
            <person name="Bowser L."/>
            <person name="Brooks S.Y."/>
            <person name="Carninci P."/>
            <person name="Chao Q."/>
            <person name="Choy N."/>
            <person name="Enju A."/>
            <person name="Goldsmith A.D."/>
            <person name="Gurjal M."/>
            <person name="Hansen N.F."/>
            <person name="Hayashizaki Y."/>
            <person name="Johnson-Hopson C."/>
            <person name="Hsuan V.W."/>
            <person name="Iida K."/>
            <person name="Karnes M."/>
            <person name="Khan S."/>
            <person name="Koesema E."/>
            <person name="Ishida J."/>
            <person name="Jiang P.X."/>
            <person name="Jones T."/>
            <person name="Kawai J."/>
            <person name="Kamiya A."/>
            <person name="Meyers C."/>
            <person name="Nakajima M."/>
            <person name="Narusaka M."/>
            <person name="Seki M."/>
            <person name="Sakurai T."/>
            <person name="Satou M."/>
            <person name="Tamse R."/>
            <person name="Vaysberg M."/>
            <person name="Wallender E.K."/>
            <person name="Wong C."/>
            <person name="Yamamura Y."/>
            <person name="Yuan S."/>
            <person name="Shinozaki K."/>
            <person name="Davis R.W."/>
            <person name="Theologis A."/>
            <person name="Ecker J.R."/>
        </authorList>
    </citation>
    <scope>NUCLEOTIDE SEQUENCE [LARGE SCALE MRNA] OF 272-474</scope>
    <source>
        <strain>cv. Columbia</strain>
    </source>
</reference>
<reference key="8">
    <citation type="journal article" date="2008" name="Genetics">
        <title>Genome analysis of Chlamydomonas reinhardtii reveals the existence of multiple, compartmentalized iron-sulfur protein assembly machineries of different evolutionary origins.</title>
        <authorList>
            <person name="Godman J."/>
            <person name="Balk J."/>
        </authorList>
    </citation>
    <scope>IDENTIFICATION</scope>
    <scope>REVIEW</scope>
</reference>
<reference key="9">
    <citation type="journal article" date="2008" name="J. Inorg. Biochem.">
        <title>The possible role of an [FeFe]-hydrogenase-like protein in the plant responses to changing atmospheric oxygen levels.</title>
        <authorList>
            <person name="Cavazza C."/>
            <person name="Martin L."/>
            <person name="Mondy S."/>
            <person name="Gaillard J."/>
            <person name="Ratet P."/>
            <person name="Fontecilla-Camps J.C."/>
        </authorList>
    </citation>
    <scope>MUTAGENESIS OF CYS-61; CYS-64; CYS-390 AND CYS-394</scope>
</reference>
<reference key="10">
    <citation type="journal article" date="2012" name="Plant Cell">
        <title>The DUF59 family gene AE7 acts in the cytosolic iron-sulfur cluster assembly pathway to maintain nuclear genome integrity in Arabidopsis.</title>
        <authorList>
            <person name="Luo D."/>
            <person name="Bernard D.G."/>
            <person name="Balk J."/>
            <person name="Hai H."/>
            <person name="Cui X."/>
        </authorList>
    </citation>
    <scope>FUNCTION</scope>
    <scope>INTERACTION WITH CIA1</scope>
    <scope>DISRUPTION PHENOTYPE</scope>
    <source>
        <strain>cv. Columbia</strain>
    </source>
</reference>
<reference key="11">
    <citation type="journal article" date="2013" name="New Phytol.">
        <title>The role of Arabidopsis thaliana NAR1, a cytosolic iron-sulfur cluster assembly component, in gametophytic gene expression and oxidative stress responses in vegetative tissue.</title>
        <authorList>
            <person name="Nakamura M."/>
            <person name="Buzas D.M."/>
            <person name="Kato A."/>
            <person name="Fujita M."/>
            <person name="Kurata N."/>
            <person name="Kinoshita T."/>
        </authorList>
    </citation>
    <scope>FUNCTION</scope>
    <scope>DISRUPTION PHENOTYPE</scope>
    <scope>TISSUE SPECIFICITY</scope>
    <scope>DEVELOPMENTAL STAGE</scope>
    <source>
        <strain>cv. Columbia</strain>
    </source>
</reference>
<reference key="12">
    <citation type="journal article" date="2014" name="Plant Cell Environ.">
        <title>GOLLUM [FeFe]-hydrogenase-like proteins are essential for plant development in normoxic conditions and modulate energy metabolism.</title>
        <authorList>
            <person name="Mondy S."/>
            <person name="Lenglet A."/>
            <person name="Cosson V."/>
            <person name="Pelletier S."/>
            <person name="Pateyron S."/>
            <person name="Gilard F."/>
            <person name="Scholte M."/>
            <person name="Brocard L."/>
            <person name="Couzigou J.M."/>
            <person name="Tcherkez G."/>
            <person name="Pean M."/>
            <person name="Ratet P."/>
        </authorList>
    </citation>
    <scope>FUNCTION</scope>
    <scope>SUBCELLULAR LOCATION</scope>
    <scope>TISSUE SPECIFICITY</scope>
    <scope>3D-STRUCTURE MODELING</scope>
    <scope>DISRUPTION PHENOTYPE</scope>
    <source>
        <strain>cv. Columbia</strain>
    </source>
</reference>
<organism evidence="13">
    <name type="scientific">Arabidopsis thaliana</name>
    <name type="common">Mouse-ear cress</name>
    <dbReference type="NCBI Taxonomy" id="3702"/>
    <lineage>
        <taxon>Eukaryota</taxon>
        <taxon>Viridiplantae</taxon>
        <taxon>Streptophyta</taxon>
        <taxon>Embryophyta</taxon>
        <taxon>Tracheophyta</taxon>
        <taxon>Spermatophyta</taxon>
        <taxon>Magnoliopsida</taxon>
        <taxon>eudicotyledons</taxon>
        <taxon>Gunneridae</taxon>
        <taxon>Pentapetalae</taxon>
        <taxon>rosids</taxon>
        <taxon>malvids</taxon>
        <taxon>Brassicales</taxon>
        <taxon>Brassicaceae</taxon>
        <taxon>Camelineae</taxon>
        <taxon>Arabidopsis</taxon>
    </lineage>
</organism>
<comment type="function">
    <text evidence="1 4 5 6">Essential component of the cytosolic iron-sulfur (Fe-S) protein assembly (CIA) machinery (PubMed:23104832). Required for the maturation of extramitochondrial Fe/S proteins (By similarity). Required for expression of the imprinted FWA gene, for seed development and is involved in the oxidative stress response in vegetative tissues (PubMed:23734982). Involved in the regulation of cell size, ploidy and cell cycle progression (PubMed:23639116). Required for growth under normoxic conditions and necessary for recovery after hypoxic treatment but its action is reactive oxygen species (ROS) independent (PubMed:23639116).</text>
</comment>
<comment type="subunit">
    <text evidence="4">Part of a complex composed of AE7, CIA1, MMS19 and NAR1. Interacts with CIA1.</text>
</comment>
<comment type="subcellular location">
    <subcellularLocation>
        <location evidence="5">Nucleus</location>
    </subcellularLocation>
    <subcellularLocation>
        <location evidence="5">Cytoplasm</location>
    </subcellularLocation>
</comment>
<comment type="tissue specificity">
    <text evidence="5 6">Expressed in developing tissues, including shoot apex, young leaves, vascular tissues, root tips, pedicels, carpels and developing seeds.</text>
</comment>
<comment type="developmental stage">
    <text evidence="6">Expressed throughout plant development.</text>
</comment>
<comment type="disruption phenotype">
    <text evidence="4 5 6">Embryonic lethality when homozygous (PubMed:23104832, PubMed:23639116, PubMed:23734982).</text>
</comment>
<comment type="miscellaneous">
    <text evidence="3 5">Coordinates probably two (Fe-S) clusters with different magnetic properties (PubMed:18329103). Knockdown mutants have a dwarf phenotype, but are indistinguishable from wild type under hypoxic conditions (PubMed:18329103, PubMed:23639116).</text>
</comment>
<comment type="similarity">
    <text evidence="9">Belongs to the NARF family.</text>
</comment>
<comment type="sequence caution" evidence="9">
    <conflict type="erroneous initiation">
        <sequence resource="EMBL-CDS" id="BAC42607"/>
    </conflict>
    <text>Truncated N-terminus.</text>
</comment>
<comment type="sequence caution" evidence="9">
    <conflict type="erroneous gene model prediction">
        <sequence resource="EMBL-CDS" id="CAB10420"/>
    </conflict>
    <text>The predicted gene At4g16440 has been split into 3 genes: At4g16440, At4g16442 and At4g16444.</text>
</comment>
<comment type="sequence caution" evidence="9">
    <conflict type="erroneous gene model prediction">
        <sequence resource="EMBL-CDS" id="CAB78686"/>
    </conflict>
    <text>The predicted gene At4g16440 has been split into 3 genes: At4g16440, At4g16442 and At4g16444.</text>
</comment>
<dbReference type="EMBL" id="AJ320258">
    <property type="protein sequence ID" value="CAC44620.1"/>
    <property type="molecule type" value="Genomic_DNA"/>
</dbReference>
<dbReference type="EMBL" id="Z97341">
    <property type="protein sequence ID" value="CAB10420.1"/>
    <property type="status" value="ALT_SEQ"/>
    <property type="molecule type" value="Genomic_DNA"/>
</dbReference>
<dbReference type="EMBL" id="AL161544">
    <property type="protein sequence ID" value="CAB78686.1"/>
    <property type="status" value="ALT_SEQ"/>
    <property type="molecule type" value="Genomic_DNA"/>
</dbReference>
<dbReference type="EMBL" id="CP002687">
    <property type="protein sequence ID" value="AEE83748.1"/>
    <property type="molecule type" value="Genomic_DNA"/>
</dbReference>
<dbReference type="EMBL" id="AK117970">
    <property type="protein sequence ID" value="BAC42607.1"/>
    <property type="status" value="ALT_INIT"/>
    <property type="molecule type" value="mRNA"/>
</dbReference>
<dbReference type="EMBL" id="BT008777">
    <property type="protein sequence ID" value="AAP68216.1"/>
    <property type="molecule type" value="mRNA"/>
</dbReference>
<dbReference type="RefSeq" id="NP_567496.4">
    <property type="nucleotide sequence ID" value="NM_117739.4"/>
</dbReference>
<dbReference type="SMR" id="Q94CL6"/>
<dbReference type="FunCoup" id="Q94CL6">
    <property type="interactions" value="3200"/>
</dbReference>
<dbReference type="STRING" id="3702.Q94CL6"/>
<dbReference type="iPTMnet" id="Q94CL6"/>
<dbReference type="PaxDb" id="3702-AT4G16440.1"/>
<dbReference type="ProteomicsDB" id="251045"/>
<dbReference type="EnsemblPlants" id="AT4G16440.1">
    <property type="protein sequence ID" value="AT4G16440.1"/>
    <property type="gene ID" value="AT4G16440"/>
</dbReference>
<dbReference type="GeneID" id="827338"/>
<dbReference type="Gramene" id="AT4G16440.1">
    <property type="protein sequence ID" value="AT4G16440.1"/>
    <property type="gene ID" value="AT4G16440"/>
</dbReference>
<dbReference type="KEGG" id="ath:AT4G16440"/>
<dbReference type="Araport" id="AT4G16440"/>
<dbReference type="TAIR" id="AT4G16440">
    <property type="gene designation" value="NAR1"/>
</dbReference>
<dbReference type="eggNOG" id="KOG2439">
    <property type="taxonomic scope" value="Eukaryota"/>
</dbReference>
<dbReference type="HOGENOM" id="CLU_018240_0_0_1"/>
<dbReference type="InParanoid" id="Q94CL6"/>
<dbReference type="OMA" id="GYLHHVL"/>
<dbReference type="OrthoDB" id="10253113at2759"/>
<dbReference type="PhylomeDB" id="Q94CL6"/>
<dbReference type="PRO" id="PR:Q94CL6"/>
<dbReference type="Proteomes" id="UP000006548">
    <property type="component" value="Chromosome 4"/>
</dbReference>
<dbReference type="ExpressionAtlas" id="Q94CL6">
    <property type="expression patterns" value="baseline and differential"/>
</dbReference>
<dbReference type="GO" id="GO:0005829">
    <property type="term" value="C:cytosol"/>
    <property type="evidence" value="ECO:0000314"/>
    <property type="project" value="TAIR"/>
</dbReference>
<dbReference type="GO" id="GO:0005634">
    <property type="term" value="C:nucleus"/>
    <property type="evidence" value="ECO:0000314"/>
    <property type="project" value="TAIR"/>
</dbReference>
<dbReference type="GO" id="GO:0051539">
    <property type="term" value="F:4 iron, 4 sulfur cluster binding"/>
    <property type="evidence" value="ECO:0007669"/>
    <property type="project" value="UniProtKB-KW"/>
</dbReference>
<dbReference type="GO" id="GO:0046872">
    <property type="term" value="F:metal ion binding"/>
    <property type="evidence" value="ECO:0007669"/>
    <property type="project" value="UniProtKB-KW"/>
</dbReference>
<dbReference type="GO" id="GO:0070482">
    <property type="term" value="P:response to oxygen levels"/>
    <property type="evidence" value="ECO:0000315"/>
    <property type="project" value="TAIR"/>
</dbReference>
<dbReference type="Gene3D" id="3.40.50.1780">
    <property type="match status" value="1"/>
</dbReference>
<dbReference type="Gene3D" id="3.40.950.10">
    <property type="entry name" value="Fe-only Hydrogenase (Larger Subunit), Chain L, domain 3"/>
    <property type="match status" value="1"/>
</dbReference>
<dbReference type="InterPro" id="IPR050340">
    <property type="entry name" value="Cytosolic_Fe-S_CAF"/>
</dbReference>
<dbReference type="InterPro" id="IPR009016">
    <property type="entry name" value="Fe_hydrogenase"/>
</dbReference>
<dbReference type="InterPro" id="IPR004108">
    <property type="entry name" value="Fe_hydrogenase_lsu_C"/>
</dbReference>
<dbReference type="InterPro" id="IPR003149">
    <property type="entry name" value="Fe_hydrogenase_ssu"/>
</dbReference>
<dbReference type="PANTHER" id="PTHR11615">
    <property type="entry name" value="NITRATE, FORMATE, IRON DEHYDROGENASE"/>
    <property type="match status" value="1"/>
</dbReference>
<dbReference type="Pfam" id="PF02906">
    <property type="entry name" value="Fe_hyd_lg_C"/>
    <property type="match status" value="1"/>
</dbReference>
<dbReference type="Pfam" id="PF02256">
    <property type="entry name" value="Fe_hyd_SSU"/>
    <property type="match status" value="1"/>
</dbReference>
<dbReference type="SMART" id="SM00902">
    <property type="entry name" value="Fe_hyd_SSU"/>
    <property type="match status" value="1"/>
</dbReference>
<dbReference type="SUPFAM" id="SSF53920">
    <property type="entry name" value="Fe-only hydrogenase"/>
    <property type="match status" value="1"/>
</dbReference>
<sequence>MSEKFSPTLRLGDLNDFIAPSQACVISLKDSKPIVKKSDRPQVVIAPKQQLEPVKISLKDCLACSGCITSAETVMLEKQSLDEFLSALSKGKDVVVSVSPQSRASLAVHYDISPLQVFKKLTTFLKSLGVKAVFDTSCSRDLVLIESCNEFVSRYKQANSDDGENSQSPLPVLSSACPGWICYAEKQLGSYVLPYVSSVKSPQQAIGAAIKHHLCQALGLRLHEVYHVTVMPCYDKKLEAARDDFVFDDGTQDNGDLKLTEVDSVLTTGEIMDLIKLKGVDFKDLEESPLDRVLTNVTEEGDLYGVAGSSGGYAETIFRHAAKALFGQTIEGPLEFKTLRNSDFREVTLQLEGKTVLKFALCYGFQNLQNIVRRVKTRKCDYQYVEIMACPAGCLNGGGQIKPKTGQSQKELIHSLEATYMNDTTLNTDPYQNPTAKRLFEEWLKEPGSNEAKKYLHTQYHPVVKSVTSQLNNW</sequence>
<accession>Q94CL6</accession>
<accession>Q8GXY2</accession>
<protein>
    <recommendedName>
        <fullName evidence="8">Protein NAR1</fullName>
    </recommendedName>
    <alternativeName>
        <fullName evidence="8">Nuclear architecture related 1</fullName>
    </alternativeName>
    <alternativeName>
        <fullName evidence="7">Protein GROWTH AT DIFFERENT OXYGEN LEVELS INFLUENCES MORPHOGENESIS</fullName>
    </alternativeName>
    <alternativeName>
        <fullName evidence="7">[FeFe]-hydrogenase-like protein GOLLUM</fullName>
    </alternativeName>
</protein>
<name>NAR1_ARATH</name>
<feature type="chain" id="PRO_0000433518" description="Protein NAR1">
    <location>
        <begin position="1"/>
        <end position="474"/>
    </location>
</feature>
<feature type="binding site" evidence="2">
    <location>
        <position position="24"/>
    </location>
    <ligand>
        <name>[4Fe-4S] cluster</name>
        <dbReference type="ChEBI" id="CHEBI:49883"/>
        <label>1</label>
    </ligand>
</feature>
<feature type="binding site" evidence="2">
    <location>
        <position position="61"/>
    </location>
    <ligand>
        <name>[4Fe-4S] cluster</name>
        <dbReference type="ChEBI" id="CHEBI:49883"/>
        <label>1</label>
    </ligand>
</feature>
<feature type="binding site" evidence="2">
    <location>
        <position position="64"/>
    </location>
    <ligand>
        <name>[4Fe-4S] cluster</name>
        <dbReference type="ChEBI" id="CHEBI:49883"/>
        <label>1</label>
    </ligand>
</feature>
<feature type="binding site" evidence="2">
    <location>
        <position position="67"/>
    </location>
    <ligand>
        <name>[4Fe-4S] cluster</name>
        <dbReference type="ChEBI" id="CHEBI:49883"/>
        <label>1</label>
    </ligand>
</feature>
<feature type="binding site" evidence="2">
    <location>
        <position position="177"/>
    </location>
    <ligand>
        <name>[4Fe-4S] cluster</name>
        <dbReference type="ChEBI" id="CHEBI:49883"/>
        <label>2</label>
    </ligand>
</feature>
<feature type="binding site" evidence="2">
    <location>
        <position position="233"/>
    </location>
    <ligand>
        <name>[4Fe-4S] cluster</name>
        <dbReference type="ChEBI" id="CHEBI:49883"/>
        <label>2</label>
    </ligand>
</feature>
<feature type="binding site" evidence="2">
    <location>
        <position position="390"/>
    </location>
    <ligand>
        <name>[4Fe-4S] cluster</name>
        <dbReference type="ChEBI" id="CHEBI:49883"/>
        <label>2</label>
    </ligand>
</feature>
<feature type="binding site" evidence="2">
    <location>
        <position position="394"/>
    </location>
    <ligand>
        <name>[4Fe-4S] cluster</name>
        <dbReference type="ChEBI" id="CHEBI:49883"/>
        <label>2</label>
    </ligand>
</feature>
<feature type="mutagenesis site" description="No effect on UV-visible spectrum; when associated with A-64." evidence="3">
    <original>C</original>
    <variation>A</variation>
    <location>
        <position position="61"/>
    </location>
</feature>
<feature type="mutagenesis site" description="No effect on UV-visible spectrum; when associated with A-61." evidence="3">
    <original>C</original>
    <variation>A</variation>
    <location>
        <position position="64"/>
    </location>
</feature>
<feature type="mutagenesis site" description="Loss of (Fe-S) clusters coordination; when associated with A-394." evidence="3">
    <original>C</original>
    <variation>A</variation>
    <location>
        <position position="390"/>
    </location>
</feature>
<feature type="mutagenesis site" description="Loss of (Fe-S) clusters coordination; when associated with A-390." evidence="3">
    <original>C</original>
    <variation>A</variation>
    <location>
        <position position="394"/>
    </location>
</feature>